<evidence type="ECO:0000305" key="1"/>
<evidence type="ECO:0000312" key="2">
    <source>
        <dbReference type="EMBL" id="EAZ35731.1"/>
    </source>
</evidence>
<feature type="chain" id="PRO_0000146690" description="Small ribosomal subunit protein uS10">
    <location>
        <begin position="1"/>
        <end position="128"/>
    </location>
</feature>
<name>RS20_ORYSJ</name>
<sequence>MAAADVAYAPPMKSGKIGFESSQEVQHRIRITLSSKSVKNLEKVCGDLVKGAKDKSLKVKGPVRMPTKVLHITTRKSPCGEGTNTWDRFEMRVHKRVIDLVSSADVVKQITSITIEPGVEVEVTISDQ</sequence>
<proteinExistence type="evidence at transcript level"/>
<dbReference type="EMBL" id="D12632">
    <property type="protein sequence ID" value="BAA02157.1"/>
    <property type="status" value="ALT_INIT"/>
    <property type="molecule type" value="mRNA"/>
</dbReference>
<dbReference type="EMBL" id="AB052962">
    <property type="protein sequence ID" value="BAB61063.1"/>
    <property type="status" value="ALT_INIT"/>
    <property type="molecule type" value="Genomic_DNA"/>
</dbReference>
<dbReference type="EMBL" id="AP002542">
    <property type="protein sequence ID" value="BAD67888.1"/>
    <property type="molecule type" value="Genomic_DNA"/>
</dbReference>
<dbReference type="EMBL" id="AP004234">
    <property type="protein sequence ID" value="BAD68866.1"/>
    <property type="molecule type" value="Genomic_DNA"/>
</dbReference>
<dbReference type="EMBL" id="AP008212">
    <property type="protein sequence ID" value="BAF18627.1"/>
    <property type="molecule type" value="Genomic_DNA"/>
</dbReference>
<dbReference type="EMBL" id="AP014962">
    <property type="protein sequence ID" value="BAS96010.1"/>
    <property type="molecule type" value="Genomic_DNA"/>
</dbReference>
<dbReference type="EMBL" id="CM000143">
    <property type="protein sequence ID" value="EAZ35731.1"/>
    <property type="molecule type" value="Genomic_DNA"/>
</dbReference>
<dbReference type="EMBL" id="AK062184">
    <property type="protein sequence ID" value="BAG88241.1"/>
    <property type="molecule type" value="mRNA"/>
</dbReference>
<dbReference type="EMBL" id="AK106717">
    <property type="protein sequence ID" value="BAG97806.1"/>
    <property type="molecule type" value="mRNA"/>
</dbReference>
<dbReference type="EMBL" id="AK120319">
    <property type="protein sequence ID" value="BAG99964.1"/>
    <property type="molecule type" value="mRNA"/>
</dbReference>
<dbReference type="PIR" id="S38356">
    <property type="entry name" value="S38356"/>
</dbReference>
<dbReference type="RefSeq" id="XP_015643050.1">
    <property type="nucleotide sequence ID" value="XM_015787564.1"/>
</dbReference>
<dbReference type="SMR" id="P35686"/>
<dbReference type="FunCoup" id="P35686">
    <property type="interactions" value="2095"/>
</dbReference>
<dbReference type="IntAct" id="P35686">
    <property type="interactions" value="1"/>
</dbReference>
<dbReference type="STRING" id="39947.P35686"/>
<dbReference type="PaxDb" id="39947-P35686"/>
<dbReference type="EnsemblPlants" id="Os06t0134000-01">
    <property type="protein sequence ID" value="Os06t0134000-01"/>
    <property type="gene ID" value="Os06g0134000"/>
</dbReference>
<dbReference type="Gramene" id="Os06t0134000-01">
    <property type="protein sequence ID" value="Os06t0134000-01"/>
    <property type="gene ID" value="Os06g0134000"/>
</dbReference>
<dbReference type="KEGG" id="dosa:Os06g0134000"/>
<dbReference type="eggNOG" id="KOG0900">
    <property type="taxonomic scope" value="Eukaryota"/>
</dbReference>
<dbReference type="HOGENOM" id="CLU_122625_0_0_1"/>
<dbReference type="InParanoid" id="P35686"/>
<dbReference type="OMA" id="WCEYRRR"/>
<dbReference type="OrthoDB" id="588367at2759"/>
<dbReference type="Proteomes" id="UP000000763">
    <property type="component" value="Chromosome 6"/>
</dbReference>
<dbReference type="Proteomes" id="UP000007752">
    <property type="component" value="Chromosome 6"/>
</dbReference>
<dbReference type="Proteomes" id="UP000059680">
    <property type="component" value="Chromosome 6"/>
</dbReference>
<dbReference type="GO" id="GO:0022627">
    <property type="term" value="C:cytosolic small ribosomal subunit"/>
    <property type="evidence" value="ECO:0000318"/>
    <property type="project" value="GO_Central"/>
</dbReference>
<dbReference type="GO" id="GO:0003723">
    <property type="term" value="F:RNA binding"/>
    <property type="evidence" value="ECO:0007669"/>
    <property type="project" value="InterPro"/>
</dbReference>
<dbReference type="GO" id="GO:0003735">
    <property type="term" value="F:structural constituent of ribosome"/>
    <property type="evidence" value="ECO:0000318"/>
    <property type="project" value="GO_Central"/>
</dbReference>
<dbReference type="GO" id="GO:0006412">
    <property type="term" value="P:translation"/>
    <property type="evidence" value="ECO:0007669"/>
    <property type="project" value="InterPro"/>
</dbReference>
<dbReference type="FunFam" id="3.30.70.600:FF:000002">
    <property type="entry name" value="40S ribosomal protein S20"/>
    <property type="match status" value="1"/>
</dbReference>
<dbReference type="Gene3D" id="3.30.70.600">
    <property type="entry name" value="Ribosomal protein S10 domain"/>
    <property type="match status" value="1"/>
</dbReference>
<dbReference type="HAMAP" id="MF_00508">
    <property type="entry name" value="Ribosomal_uS10"/>
    <property type="match status" value="1"/>
</dbReference>
<dbReference type="InterPro" id="IPR001848">
    <property type="entry name" value="Ribosomal_uS10"/>
</dbReference>
<dbReference type="InterPro" id="IPR018268">
    <property type="entry name" value="Ribosomal_uS10_CS"/>
</dbReference>
<dbReference type="InterPro" id="IPR027486">
    <property type="entry name" value="Ribosomal_uS10_dom"/>
</dbReference>
<dbReference type="InterPro" id="IPR036838">
    <property type="entry name" value="Ribosomal_uS10_dom_sf"/>
</dbReference>
<dbReference type="InterPro" id="IPR005729">
    <property type="entry name" value="Ribosomal_uS10_euk/arc"/>
</dbReference>
<dbReference type="NCBIfam" id="TIGR01046">
    <property type="entry name" value="uS10_euk_arch"/>
    <property type="match status" value="1"/>
</dbReference>
<dbReference type="PANTHER" id="PTHR11700">
    <property type="entry name" value="30S RIBOSOMAL PROTEIN S10 FAMILY MEMBER"/>
    <property type="match status" value="1"/>
</dbReference>
<dbReference type="Pfam" id="PF00338">
    <property type="entry name" value="Ribosomal_S10"/>
    <property type="match status" value="1"/>
</dbReference>
<dbReference type="PRINTS" id="PR00971">
    <property type="entry name" value="RIBOSOMALS10"/>
</dbReference>
<dbReference type="SMART" id="SM01403">
    <property type="entry name" value="Ribosomal_S10"/>
    <property type="match status" value="1"/>
</dbReference>
<dbReference type="SUPFAM" id="SSF54999">
    <property type="entry name" value="Ribosomal protein S10"/>
    <property type="match status" value="1"/>
</dbReference>
<dbReference type="PROSITE" id="PS00361">
    <property type="entry name" value="RIBOSOMAL_S10"/>
    <property type="match status" value="1"/>
</dbReference>
<accession>P35686</accession>
<accession>Q0DEU6</accession>
<accession>Q5VNV9</accession>
<accession>Q7GC39</accession>
<comment type="similarity">
    <text evidence="1">Belongs to the universal ribosomal protein uS10 family.</text>
</comment>
<comment type="sequence caution" evidence="1">
    <conflict type="erroneous initiation">
        <sequence resource="EMBL-CDS" id="BAA02157"/>
    </conflict>
</comment>
<comment type="sequence caution" evidence="1">
    <conflict type="erroneous initiation">
        <sequence resource="EMBL-CDS" id="BAB61063"/>
    </conflict>
</comment>
<gene>
    <name type="primary">RPS20</name>
    <name type="ordered locus">Os06g0134000</name>
    <name type="ordered locus">LOC_Os06g04290</name>
    <name evidence="2" type="ORF">OsJ_20022</name>
    <name type="ORF">P0001H02.5-1</name>
    <name type="ORF">P0679C08.43-1</name>
</gene>
<organism>
    <name type="scientific">Oryza sativa subsp. japonica</name>
    <name type="common">Rice</name>
    <dbReference type="NCBI Taxonomy" id="39947"/>
    <lineage>
        <taxon>Eukaryota</taxon>
        <taxon>Viridiplantae</taxon>
        <taxon>Streptophyta</taxon>
        <taxon>Embryophyta</taxon>
        <taxon>Tracheophyta</taxon>
        <taxon>Spermatophyta</taxon>
        <taxon>Magnoliopsida</taxon>
        <taxon>Liliopsida</taxon>
        <taxon>Poales</taxon>
        <taxon>Poaceae</taxon>
        <taxon>BOP clade</taxon>
        <taxon>Oryzoideae</taxon>
        <taxon>Oryzeae</taxon>
        <taxon>Oryzinae</taxon>
        <taxon>Oryza</taxon>
        <taxon>Oryza sativa</taxon>
    </lineage>
</organism>
<reference key="1">
    <citation type="journal article" date="1993" name="Biochim. Biophys. Acta">
        <title>The primary structure of two proteins from the small ribosomal subunit of rice.</title>
        <authorList>
            <person name="Nishi R."/>
            <person name="Hashimoto H."/>
            <person name="Uchimiya H."/>
            <person name="Kato A."/>
        </authorList>
    </citation>
    <scope>NUCLEOTIDE SEQUENCE [MRNA]</scope>
</reference>
<reference key="2">
    <citation type="submission" date="2000-12" db="EMBL/GenBank/DDBJ databases">
        <title>Mapping of the sequences expressed in the rice callus onto a BAC contig: identification of a genomic segment carrying closely linked genes encoding EPSP synthase and rps20.</title>
        <authorList>
            <person name="Wu L."/>
            <person name="Nagano H."/>
            <person name="Yoshida K."/>
            <person name="Kawasaki S."/>
            <person name="Kishima Y."/>
            <person name="Sano Y."/>
        </authorList>
    </citation>
    <scope>NUCLEOTIDE SEQUENCE [GENOMIC DNA]</scope>
</reference>
<reference key="3">
    <citation type="journal article" date="2005" name="Nature">
        <title>The map-based sequence of the rice genome.</title>
        <authorList>
            <consortium name="International rice genome sequencing project (IRGSP)"/>
        </authorList>
    </citation>
    <scope>NUCLEOTIDE SEQUENCE [LARGE SCALE GENOMIC DNA]</scope>
    <source>
        <strain>cv. Nipponbare</strain>
    </source>
</reference>
<reference key="4">
    <citation type="journal article" date="2008" name="Nucleic Acids Res.">
        <title>The rice annotation project database (RAP-DB): 2008 update.</title>
        <authorList>
            <consortium name="The rice annotation project (RAP)"/>
        </authorList>
    </citation>
    <scope>GENOME REANNOTATION</scope>
    <source>
        <strain>cv. Nipponbare</strain>
    </source>
</reference>
<reference key="5">
    <citation type="journal article" date="2013" name="Rice">
        <title>Improvement of the Oryza sativa Nipponbare reference genome using next generation sequence and optical map data.</title>
        <authorList>
            <person name="Kawahara Y."/>
            <person name="de la Bastide M."/>
            <person name="Hamilton J.P."/>
            <person name="Kanamori H."/>
            <person name="McCombie W.R."/>
            <person name="Ouyang S."/>
            <person name="Schwartz D.C."/>
            <person name="Tanaka T."/>
            <person name="Wu J."/>
            <person name="Zhou S."/>
            <person name="Childs K.L."/>
            <person name="Davidson R.M."/>
            <person name="Lin H."/>
            <person name="Quesada-Ocampo L."/>
            <person name="Vaillancourt B."/>
            <person name="Sakai H."/>
            <person name="Lee S.S."/>
            <person name="Kim J."/>
            <person name="Numa H."/>
            <person name="Itoh T."/>
            <person name="Buell C.R."/>
            <person name="Matsumoto T."/>
        </authorList>
    </citation>
    <scope>GENOME REANNOTATION</scope>
    <source>
        <strain>cv. Nipponbare</strain>
    </source>
</reference>
<reference key="6">
    <citation type="journal article" date="2005" name="PLoS Biol.">
        <title>The genomes of Oryza sativa: a history of duplications.</title>
        <authorList>
            <person name="Yu J."/>
            <person name="Wang J."/>
            <person name="Lin W."/>
            <person name="Li S."/>
            <person name="Li H."/>
            <person name="Zhou J."/>
            <person name="Ni P."/>
            <person name="Dong W."/>
            <person name="Hu S."/>
            <person name="Zeng C."/>
            <person name="Zhang J."/>
            <person name="Zhang Y."/>
            <person name="Li R."/>
            <person name="Xu Z."/>
            <person name="Li S."/>
            <person name="Li X."/>
            <person name="Zheng H."/>
            <person name="Cong L."/>
            <person name="Lin L."/>
            <person name="Yin J."/>
            <person name="Geng J."/>
            <person name="Li G."/>
            <person name="Shi J."/>
            <person name="Liu J."/>
            <person name="Lv H."/>
            <person name="Li J."/>
            <person name="Wang J."/>
            <person name="Deng Y."/>
            <person name="Ran L."/>
            <person name="Shi X."/>
            <person name="Wang X."/>
            <person name="Wu Q."/>
            <person name="Li C."/>
            <person name="Ren X."/>
            <person name="Wang J."/>
            <person name="Wang X."/>
            <person name="Li D."/>
            <person name="Liu D."/>
            <person name="Zhang X."/>
            <person name="Ji Z."/>
            <person name="Zhao W."/>
            <person name="Sun Y."/>
            <person name="Zhang Z."/>
            <person name="Bao J."/>
            <person name="Han Y."/>
            <person name="Dong L."/>
            <person name="Ji J."/>
            <person name="Chen P."/>
            <person name="Wu S."/>
            <person name="Liu J."/>
            <person name="Xiao Y."/>
            <person name="Bu D."/>
            <person name="Tan J."/>
            <person name="Yang L."/>
            <person name="Ye C."/>
            <person name="Zhang J."/>
            <person name="Xu J."/>
            <person name="Zhou Y."/>
            <person name="Yu Y."/>
            <person name="Zhang B."/>
            <person name="Zhuang S."/>
            <person name="Wei H."/>
            <person name="Liu B."/>
            <person name="Lei M."/>
            <person name="Yu H."/>
            <person name="Li Y."/>
            <person name="Xu H."/>
            <person name="Wei S."/>
            <person name="He X."/>
            <person name="Fang L."/>
            <person name="Zhang Z."/>
            <person name="Zhang Y."/>
            <person name="Huang X."/>
            <person name="Su Z."/>
            <person name="Tong W."/>
            <person name="Li J."/>
            <person name="Tong Z."/>
            <person name="Li S."/>
            <person name="Ye J."/>
            <person name="Wang L."/>
            <person name="Fang L."/>
            <person name="Lei T."/>
            <person name="Chen C.-S."/>
            <person name="Chen H.-C."/>
            <person name="Xu Z."/>
            <person name="Li H."/>
            <person name="Huang H."/>
            <person name="Zhang F."/>
            <person name="Xu H."/>
            <person name="Li N."/>
            <person name="Zhao C."/>
            <person name="Li S."/>
            <person name="Dong L."/>
            <person name="Huang Y."/>
            <person name="Li L."/>
            <person name="Xi Y."/>
            <person name="Qi Q."/>
            <person name="Li W."/>
            <person name="Zhang B."/>
            <person name="Hu W."/>
            <person name="Zhang Y."/>
            <person name="Tian X."/>
            <person name="Jiao Y."/>
            <person name="Liang X."/>
            <person name="Jin J."/>
            <person name="Gao L."/>
            <person name="Zheng W."/>
            <person name="Hao B."/>
            <person name="Liu S.-M."/>
            <person name="Wang W."/>
            <person name="Yuan L."/>
            <person name="Cao M."/>
            <person name="McDermott J."/>
            <person name="Samudrala R."/>
            <person name="Wang J."/>
            <person name="Wong G.K.-S."/>
            <person name="Yang H."/>
        </authorList>
    </citation>
    <scope>NUCLEOTIDE SEQUENCE [LARGE SCALE GENOMIC DNA]</scope>
    <source>
        <strain>cv. Nipponbare</strain>
    </source>
</reference>
<reference key="7">
    <citation type="journal article" date="2003" name="Science">
        <title>Collection, mapping, and annotation of over 28,000 cDNA clones from japonica rice.</title>
        <authorList>
            <consortium name="The rice full-length cDNA consortium"/>
        </authorList>
    </citation>
    <scope>NUCLEOTIDE SEQUENCE [LARGE SCALE MRNA]</scope>
    <source>
        <strain>cv. Nipponbare</strain>
    </source>
</reference>
<protein>
    <recommendedName>
        <fullName evidence="1">Small ribosomal subunit protein uS10</fullName>
    </recommendedName>
    <alternativeName>
        <fullName>40S ribosomal protein S20</fullName>
    </alternativeName>
</protein>
<keyword id="KW-1185">Reference proteome</keyword>
<keyword id="KW-0687">Ribonucleoprotein</keyword>
<keyword id="KW-0689">Ribosomal protein</keyword>